<organism>
    <name type="scientific">Homo sapiens</name>
    <name type="common">Human</name>
    <dbReference type="NCBI Taxonomy" id="9606"/>
    <lineage>
        <taxon>Eukaryota</taxon>
        <taxon>Metazoa</taxon>
        <taxon>Chordata</taxon>
        <taxon>Craniata</taxon>
        <taxon>Vertebrata</taxon>
        <taxon>Euteleostomi</taxon>
        <taxon>Mammalia</taxon>
        <taxon>Eutheria</taxon>
        <taxon>Euarchontoglires</taxon>
        <taxon>Primates</taxon>
        <taxon>Haplorrhini</taxon>
        <taxon>Catarrhini</taxon>
        <taxon>Hominidae</taxon>
        <taxon>Homo</taxon>
    </lineage>
</organism>
<accession>Q86YS3</accession>
<accession>Q52LI1</accession>
<accession>Q8N829</accession>
<accession>Q8NDT7</accession>
<accession>Q969D8</accession>
<keyword id="KW-0025">Alternative splicing</keyword>
<keyword id="KW-0106">Calcium</keyword>
<keyword id="KW-0175">Coiled coil</keyword>
<keyword id="KW-0963">Cytoplasm</keyword>
<keyword id="KW-0968">Cytoplasmic vesicle</keyword>
<keyword id="KW-0206">Cytoskeleton</keyword>
<keyword id="KW-0967">Endosome</keyword>
<keyword id="KW-0945">Host-virus interaction</keyword>
<keyword id="KW-0472">Membrane</keyword>
<keyword id="KW-0479">Metal-binding</keyword>
<keyword id="KW-1267">Proteomics identification</keyword>
<keyword id="KW-1185">Reference proteome</keyword>
<keyword id="KW-0813">Transport</keyword>
<evidence type="ECO:0000250" key="1"/>
<evidence type="ECO:0000255" key="2"/>
<evidence type="ECO:0000255" key="3">
    <source>
        <dbReference type="PROSITE-ProRule" id="PRU00448"/>
    </source>
</evidence>
<evidence type="ECO:0000255" key="4">
    <source>
        <dbReference type="PROSITE-ProRule" id="PRU00844"/>
    </source>
</evidence>
<evidence type="ECO:0000256" key="5">
    <source>
        <dbReference type="SAM" id="MobiDB-lite"/>
    </source>
</evidence>
<evidence type="ECO:0000269" key="6">
    <source>
    </source>
</evidence>
<evidence type="ECO:0000269" key="7">
    <source>
    </source>
</evidence>
<evidence type="ECO:0000269" key="8">
    <source>
    </source>
</evidence>
<evidence type="ECO:0000269" key="9">
    <source>
    </source>
</evidence>
<evidence type="ECO:0000269" key="10">
    <source>
    </source>
</evidence>
<evidence type="ECO:0000269" key="11">
    <source>
    </source>
</evidence>
<evidence type="ECO:0000269" key="12">
    <source>
    </source>
</evidence>
<evidence type="ECO:0000303" key="13">
    <source>
    </source>
</evidence>
<evidence type="ECO:0000305" key="14"/>
<reference key="1">
    <citation type="journal article" date="2002" name="Biochem. Biophys. Res. Commun.">
        <title>Rab11-FIP4 interacts with Rab11 in a GTP-dependent manner and its overexpression condenses the Rab11 positive compartment in HeLa cells.</title>
        <authorList>
            <person name="Wallace D.M."/>
            <person name="Lindsay A.J."/>
            <person name="Hendrick A.G."/>
            <person name="McCaffrey M.W."/>
        </authorList>
    </citation>
    <scope>NUCLEOTIDE SEQUENCE [MRNA] (ISOFORM 1)</scope>
    <scope>FUNCTION IN ENDOSOMAL TRAFFICKING</scope>
    <scope>SUBUNIT</scope>
    <scope>INTERACTION WITH RAB11A</scope>
</reference>
<reference key="2">
    <citation type="journal article" date="2004" name="Nat. Genet.">
        <title>Complete sequencing and characterization of 21,243 full-length human cDNAs.</title>
        <authorList>
            <person name="Ota T."/>
            <person name="Suzuki Y."/>
            <person name="Nishikawa T."/>
            <person name="Otsuki T."/>
            <person name="Sugiyama T."/>
            <person name="Irie R."/>
            <person name="Wakamatsu A."/>
            <person name="Hayashi K."/>
            <person name="Sato H."/>
            <person name="Nagai K."/>
            <person name="Kimura K."/>
            <person name="Makita H."/>
            <person name="Sekine M."/>
            <person name="Obayashi M."/>
            <person name="Nishi T."/>
            <person name="Shibahara T."/>
            <person name="Tanaka T."/>
            <person name="Ishii S."/>
            <person name="Yamamoto J."/>
            <person name="Saito K."/>
            <person name="Kawai Y."/>
            <person name="Isono Y."/>
            <person name="Nakamura Y."/>
            <person name="Nagahari K."/>
            <person name="Murakami K."/>
            <person name="Yasuda T."/>
            <person name="Iwayanagi T."/>
            <person name="Wagatsuma M."/>
            <person name="Shiratori A."/>
            <person name="Sudo H."/>
            <person name="Hosoiri T."/>
            <person name="Kaku Y."/>
            <person name="Kodaira H."/>
            <person name="Kondo H."/>
            <person name="Sugawara M."/>
            <person name="Takahashi M."/>
            <person name="Kanda K."/>
            <person name="Yokoi T."/>
            <person name="Furuya T."/>
            <person name="Kikkawa E."/>
            <person name="Omura Y."/>
            <person name="Abe K."/>
            <person name="Kamihara K."/>
            <person name="Katsuta N."/>
            <person name="Sato K."/>
            <person name="Tanikawa M."/>
            <person name="Yamazaki M."/>
            <person name="Ninomiya K."/>
            <person name="Ishibashi T."/>
            <person name="Yamashita H."/>
            <person name="Murakawa K."/>
            <person name="Fujimori K."/>
            <person name="Tanai H."/>
            <person name="Kimata M."/>
            <person name="Watanabe M."/>
            <person name="Hiraoka S."/>
            <person name="Chiba Y."/>
            <person name="Ishida S."/>
            <person name="Ono Y."/>
            <person name="Takiguchi S."/>
            <person name="Watanabe S."/>
            <person name="Yosida M."/>
            <person name="Hotuta T."/>
            <person name="Kusano J."/>
            <person name="Kanehori K."/>
            <person name="Takahashi-Fujii A."/>
            <person name="Hara H."/>
            <person name="Tanase T.-O."/>
            <person name="Nomura Y."/>
            <person name="Togiya S."/>
            <person name="Komai F."/>
            <person name="Hara R."/>
            <person name="Takeuchi K."/>
            <person name="Arita M."/>
            <person name="Imose N."/>
            <person name="Musashino K."/>
            <person name="Yuuki H."/>
            <person name="Oshima A."/>
            <person name="Sasaki N."/>
            <person name="Aotsuka S."/>
            <person name="Yoshikawa Y."/>
            <person name="Matsunawa H."/>
            <person name="Ichihara T."/>
            <person name="Shiohata N."/>
            <person name="Sano S."/>
            <person name="Moriya S."/>
            <person name="Momiyama H."/>
            <person name="Satoh N."/>
            <person name="Takami S."/>
            <person name="Terashima Y."/>
            <person name="Suzuki O."/>
            <person name="Nakagawa S."/>
            <person name="Senoh A."/>
            <person name="Mizoguchi H."/>
            <person name="Goto Y."/>
            <person name="Shimizu F."/>
            <person name="Wakebe H."/>
            <person name="Hishigaki H."/>
            <person name="Watanabe T."/>
            <person name="Sugiyama A."/>
            <person name="Takemoto M."/>
            <person name="Kawakami B."/>
            <person name="Yamazaki M."/>
            <person name="Watanabe K."/>
            <person name="Kumagai A."/>
            <person name="Itakura S."/>
            <person name="Fukuzumi Y."/>
            <person name="Fujimori Y."/>
            <person name="Komiyama M."/>
            <person name="Tashiro H."/>
            <person name="Tanigami A."/>
            <person name="Fujiwara T."/>
            <person name="Ono T."/>
            <person name="Yamada K."/>
            <person name="Fujii Y."/>
            <person name="Ozaki K."/>
            <person name="Hirao M."/>
            <person name="Ohmori Y."/>
            <person name="Kawabata A."/>
            <person name="Hikiji T."/>
            <person name="Kobatake N."/>
            <person name="Inagaki H."/>
            <person name="Ikema Y."/>
            <person name="Okamoto S."/>
            <person name="Okitani R."/>
            <person name="Kawakami T."/>
            <person name="Noguchi S."/>
            <person name="Itoh T."/>
            <person name="Shigeta K."/>
            <person name="Senba T."/>
            <person name="Matsumura K."/>
            <person name="Nakajima Y."/>
            <person name="Mizuno T."/>
            <person name="Morinaga M."/>
            <person name="Sasaki M."/>
            <person name="Togashi T."/>
            <person name="Oyama M."/>
            <person name="Hata H."/>
            <person name="Watanabe M."/>
            <person name="Komatsu T."/>
            <person name="Mizushima-Sugano J."/>
            <person name="Satoh T."/>
            <person name="Shirai Y."/>
            <person name="Takahashi Y."/>
            <person name="Nakagawa K."/>
            <person name="Okumura K."/>
            <person name="Nagase T."/>
            <person name="Nomura N."/>
            <person name="Kikuchi H."/>
            <person name="Masuho Y."/>
            <person name="Yamashita R."/>
            <person name="Nakai K."/>
            <person name="Yada T."/>
            <person name="Nakamura Y."/>
            <person name="Ohara O."/>
            <person name="Isogai T."/>
            <person name="Sugano S."/>
        </authorList>
    </citation>
    <scope>NUCLEOTIDE SEQUENCE [LARGE SCALE MRNA] (ISOFORM 2)</scope>
    <source>
        <tissue>Testis</tissue>
    </source>
</reference>
<reference key="3">
    <citation type="journal article" date="2004" name="Genome Res.">
        <title>The status, quality, and expansion of the NIH full-length cDNA project: the Mammalian Gene Collection (MGC).</title>
        <authorList>
            <consortium name="The MGC Project Team"/>
        </authorList>
    </citation>
    <scope>NUCLEOTIDE SEQUENCE [LARGE SCALE MRNA] (ISOFORM 1)</scope>
    <source>
        <tissue>Brain</tissue>
    </source>
</reference>
<reference key="4">
    <citation type="journal article" date="2003" name="Genes Chromosomes Cancer">
        <title>Complete physical map and gene content of the human NF1 tumor suppressor region in human and mouse.</title>
        <authorList>
            <person name="Jenne D.E."/>
            <person name="Tinschert S."/>
            <person name="Dorschner M.O."/>
            <person name="Hameister H."/>
            <person name="Stephens K."/>
            <person name="Kehrer-Sawatzki H."/>
        </authorList>
    </citation>
    <scope>NUCLEOTIDE SEQUENCE [MRNA] OF 29-637 (ISOFORM 1)</scope>
</reference>
<reference key="5">
    <citation type="journal article" date="2001" name="DNA Res.">
        <title>Prediction of the coding sequences of unidentified human genes. XX. The complete sequences of 100 new cDNA clones from brain which code for large proteins in vitro.</title>
        <authorList>
            <person name="Nagase T."/>
            <person name="Nakayama M."/>
            <person name="Nakajima D."/>
            <person name="Kikuno R."/>
            <person name="Ohara O."/>
        </authorList>
    </citation>
    <scope>NUCLEOTIDE SEQUENCE [LARGE SCALE MRNA] OF 29-637 (ISOFORM 1)</scope>
    <source>
        <tissue>Brain</tissue>
    </source>
</reference>
<reference key="6">
    <citation type="journal article" date="2007" name="BMC Genomics">
        <title>The full-ORF clone resource of the German cDNA consortium.</title>
        <authorList>
            <person name="Bechtel S."/>
            <person name="Rosenfelder H."/>
            <person name="Duda A."/>
            <person name="Schmidt C.P."/>
            <person name="Ernst U."/>
            <person name="Wellenreuther R."/>
            <person name="Mehrle A."/>
            <person name="Schuster C."/>
            <person name="Bahr A."/>
            <person name="Bloecker H."/>
            <person name="Heubner D."/>
            <person name="Hoerlein A."/>
            <person name="Michel G."/>
            <person name="Wedler H."/>
            <person name="Koehrer K."/>
            <person name="Ottenwaelder B."/>
            <person name="Poustka A."/>
            <person name="Wiemann S."/>
            <person name="Schupp I."/>
        </authorList>
    </citation>
    <scope>NUCLEOTIDE SEQUENCE [LARGE SCALE MRNA] OF 342-637 (ISOFORM 1)</scope>
    <source>
        <tissue>Brain</tissue>
    </source>
</reference>
<reference key="7">
    <citation type="journal article" date="2002" name="Biochem. Biophys. Res. Commun.">
        <title>The novel Rab11-FIP/Rip/RCP family of proteins displays extensive homo- and hetero-interacting abilities.</title>
        <authorList>
            <person name="Wallace D.M."/>
            <person name="Lindsay A.J."/>
            <person name="Hendrick A.G."/>
            <person name="McCaffrey M.W."/>
        </authorList>
    </citation>
    <scope>SUBUNIT</scope>
</reference>
<reference key="8">
    <citation type="journal article" date="2003" name="Mol. Biol. Cell">
        <title>Arfophilins are dual Arf/Rab 11 binding proteins that regulate recycling endosome distribution and are related to Drosophila nuclear fallout.</title>
        <authorList>
            <person name="Hickson G.R."/>
            <person name="Matheson J."/>
            <person name="Riggs B."/>
            <person name="Maier V.H."/>
            <person name="Fielding A.B."/>
            <person name="Prekeris R."/>
            <person name="Sullivan W."/>
            <person name="Barr F.A."/>
            <person name="Gould G.W."/>
        </authorList>
    </citation>
    <scope>SUBCELLULAR LOCATION</scope>
    <scope>TISSUE SPECIFICITY</scope>
</reference>
<reference key="9">
    <citation type="journal article" date="2005" name="EMBO J.">
        <title>Rab11-FIP3 and FIP4 interact with Arf6 and the exocyst to control membrane traffic in cytokinesis.</title>
        <authorList>
            <person name="Fielding A.B."/>
            <person name="Schonteich E."/>
            <person name="Matheson J."/>
            <person name="Wilson G."/>
            <person name="Yu X."/>
            <person name="Hickson G.R."/>
            <person name="Srivastava S."/>
            <person name="Baldwin S.A."/>
            <person name="Prekeris R."/>
            <person name="Gould G.W."/>
        </authorList>
    </citation>
    <scope>SUBCELLULAR LOCATION</scope>
    <scope>INTERACTION WITH RAB11A AND ARF6</scope>
    <scope>MUTAGENESIS OF ASP-627</scope>
</reference>
<reference key="10">
    <citation type="journal article" date="2005" name="Mol. Biol. Cell">
        <title>The FIP3-Rab11 protein complex regulates recycling endosome targeting to the cleavage furrow during late cytokinesis.</title>
        <authorList>
            <person name="Wilson G.M."/>
            <person name="Fielding A.B."/>
            <person name="Simon G.C."/>
            <person name="Yu X."/>
            <person name="Andrews P.D."/>
            <person name="Hames R.S."/>
            <person name="Frey A.M."/>
            <person name="Peden A.A."/>
            <person name="Gould G.W."/>
            <person name="Prekeris R."/>
        </authorList>
    </citation>
    <scope>SUBCELLULAR LOCATION</scope>
    <scope>INTERACTION WITH RAB11A</scope>
</reference>
<reference key="11">
    <citation type="journal article" date="2009" name="Traffic">
        <title>HCMV-encoded glycoprotein M (UL100) interacts with Rab11 effector protein FIP4.</title>
        <authorList>
            <person name="Krzyzaniak M.A."/>
            <person name="Mach M."/>
            <person name="Britt W.J."/>
        </authorList>
    </citation>
    <scope>INTERACTION WITH HUMAN CYTOMEGALOVIRUS GM/UL100 (MICROBIAL INFECTION)</scope>
</reference>
<reference key="12">
    <citation type="journal article" date="2010" name="J. Biol. Chem.">
        <title>A protein interaction network for Ecm29 links the 26 S proteasome to molecular motors and endosomal components.</title>
        <authorList>
            <person name="Gorbea C."/>
            <person name="Pratt G."/>
            <person name="Ustrell V."/>
            <person name="Bell R."/>
            <person name="Sahasrabudhe S."/>
            <person name="Hughes R.E."/>
            <person name="Rechsteiner M."/>
        </authorList>
    </citation>
    <scope>SUBCELLULAR LOCATION</scope>
    <scope>INTERACTION WITH ECPAS</scope>
</reference>
<reference key="13">
    <citation type="journal article" date="2013" name="J. Proteome Res.">
        <title>Toward a comprehensive characterization of a human cancer cell phosphoproteome.</title>
        <authorList>
            <person name="Zhou H."/>
            <person name="Di Palma S."/>
            <person name="Preisinger C."/>
            <person name="Peng M."/>
            <person name="Polat A.N."/>
            <person name="Heck A.J."/>
            <person name="Mohammed S."/>
        </authorList>
    </citation>
    <scope>IDENTIFICATION BY MASS SPECTROMETRY [LARGE SCALE ANALYSIS]</scope>
    <source>
        <tissue>Erythroleukemia</tissue>
    </source>
</reference>
<name>RFIP4_HUMAN</name>
<dbReference type="EMBL" id="AY169244">
    <property type="protein sequence ID" value="AAO21970.1"/>
    <property type="molecule type" value="mRNA"/>
</dbReference>
<dbReference type="EMBL" id="AK097424">
    <property type="protein sequence ID" value="BAC05045.1"/>
    <property type="molecule type" value="mRNA"/>
</dbReference>
<dbReference type="EMBL" id="BC093914">
    <property type="protein sequence ID" value="AAH93914.1"/>
    <property type="molecule type" value="mRNA"/>
</dbReference>
<dbReference type="EMBL" id="BC101517">
    <property type="protein sequence ID" value="AAI01518.1"/>
    <property type="molecule type" value="mRNA"/>
</dbReference>
<dbReference type="EMBL" id="AJ314646">
    <property type="protein sequence ID" value="CAC44535.1"/>
    <property type="molecule type" value="mRNA"/>
</dbReference>
<dbReference type="EMBL" id="AB058724">
    <property type="protein sequence ID" value="BAB47450.1"/>
    <property type="molecule type" value="mRNA"/>
</dbReference>
<dbReference type="EMBL" id="AL831830">
    <property type="protein sequence ID" value="CAD38543.1"/>
    <property type="molecule type" value="mRNA"/>
</dbReference>
<dbReference type="CCDS" id="CCDS11267.1">
    <molecule id="Q86YS3-1"/>
</dbReference>
<dbReference type="CCDS" id="CCDS76985.1">
    <molecule id="Q86YS3-2"/>
</dbReference>
<dbReference type="RefSeq" id="NP_001290471.2">
    <molecule id="Q86YS3-2"/>
    <property type="nucleotide sequence ID" value="NM_001303542.3"/>
</dbReference>
<dbReference type="RefSeq" id="NP_001333677.1">
    <property type="nucleotide sequence ID" value="NM_001346748.1"/>
</dbReference>
<dbReference type="RefSeq" id="NP_001333678.1">
    <property type="nucleotide sequence ID" value="NM_001346749.1"/>
</dbReference>
<dbReference type="RefSeq" id="NP_116321.2">
    <molecule id="Q86YS3-1"/>
    <property type="nucleotide sequence ID" value="NM_032932.5"/>
</dbReference>
<dbReference type="SMR" id="Q86YS3"/>
<dbReference type="BioGRID" id="124079">
    <property type="interactions" value="25"/>
</dbReference>
<dbReference type="DIP" id="DIP-47495N"/>
<dbReference type="FunCoup" id="Q86YS3">
    <property type="interactions" value="342"/>
</dbReference>
<dbReference type="IntAct" id="Q86YS3">
    <property type="interactions" value="22"/>
</dbReference>
<dbReference type="MINT" id="Q86YS3"/>
<dbReference type="STRING" id="9606.ENSP00000482620"/>
<dbReference type="iPTMnet" id="Q86YS3"/>
<dbReference type="PhosphoSitePlus" id="Q86YS3"/>
<dbReference type="BioMuta" id="RAB11FIP4"/>
<dbReference type="DMDM" id="67472134"/>
<dbReference type="jPOST" id="Q86YS3"/>
<dbReference type="MassIVE" id="Q86YS3"/>
<dbReference type="PaxDb" id="9606-ENSP00000482620"/>
<dbReference type="PeptideAtlas" id="Q86YS3"/>
<dbReference type="ProteomicsDB" id="70461">
    <molecule id="Q86YS3-1"/>
</dbReference>
<dbReference type="ProteomicsDB" id="70462">
    <molecule id="Q86YS3-2"/>
</dbReference>
<dbReference type="Antibodypedia" id="54771">
    <property type="antibodies" value="102 antibodies from 20 providers"/>
</dbReference>
<dbReference type="DNASU" id="84440"/>
<dbReference type="Ensembl" id="ENST00000394744.6">
    <molecule id="Q86YS3-2"/>
    <property type="protein sequence ID" value="ENSP00000378227.2"/>
    <property type="gene ID" value="ENSG00000131242.18"/>
</dbReference>
<dbReference type="Ensembl" id="ENST00000621161.5">
    <molecule id="Q86YS3-1"/>
    <property type="protein sequence ID" value="ENSP00000482620.1"/>
    <property type="gene ID" value="ENSG00000131242.18"/>
</dbReference>
<dbReference type="GeneID" id="84440"/>
<dbReference type="KEGG" id="hsa:84440"/>
<dbReference type="MANE-Select" id="ENST00000621161.5">
    <property type="protein sequence ID" value="ENSP00000482620.1"/>
    <property type="RefSeq nucleotide sequence ID" value="NM_032932.6"/>
    <property type="RefSeq protein sequence ID" value="NP_116321.2"/>
</dbReference>
<dbReference type="UCSC" id="uc032fao.2">
    <molecule id="Q86YS3-1"/>
    <property type="organism name" value="human"/>
</dbReference>
<dbReference type="AGR" id="HGNC:30267"/>
<dbReference type="CTD" id="84440"/>
<dbReference type="DisGeNET" id="84440"/>
<dbReference type="GeneCards" id="RAB11FIP4"/>
<dbReference type="HGNC" id="HGNC:30267">
    <property type="gene designation" value="RAB11FIP4"/>
</dbReference>
<dbReference type="HPA" id="ENSG00000131242">
    <property type="expression patterns" value="Tissue enhanced (brain, testis)"/>
</dbReference>
<dbReference type="MIM" id="611999">
    <property type="type" value="gene"/>
</dbReference>
<dbReference type="neXtProt" id="NX_Q86YS3"/>
<dbReference type="OpenTargets" id="ENSG00000131242"/>
<dbReference type="PharmGKB" id="PA134978007"/>
<dbReference type="VEuPathDB" id="HostDB:ENSG00000131242"/>
<dbReference type="eggNOG" id="KOG0982">
    <property type="taxonomic scope" value="Eukaryota"/>
</dbReference>
<dbReference type="GeneTree" id="ENSGT00440000033742"/>
<dbReference type="HOGENOM" id="CLU_018925_1_1_1"/>
<dbReference type="InParanoid" id="Q86YS3"/>
<dbReference type="OMA" id="YCKLERE"/>
<dbReference type="OrthoDB" id="418358at2759"/>
<dbReference type="PAN-GO" id="Q86YS3">
    <property type="GO annotations" value="6 GO annotations based on evolutionary models"/>
</dbReference>
<dbReference type="PhylomeDB" id="Q86YS3"/>
<dbReference type="TreeFam" id="TF327221"/>
<dbReference type="PathwayCommons" id="Q86YS3"/>
<dbReference type="SignaLink" id="Q86YS3"/>
<dbReference type="BioGRID-ORCS" id="84440">
    <property type="hits" value="22 hits in 1159 CRISPR screens"/>
</dbReference>
<dbReference type="CD-CODE" id="8C2F96ED">
    <property type="entry name" value="Centrosome"/>
</dbReference>
<dbReference type="ChiTaRS" id="RAB11FIP4">
    <property type="organism name" value="human"/>
</dbReference>
<dbReference type="GeneWiki" id="RAB11FIP4"/>
<dbReference type="GenomeRNAi" id="84440"/>
<dbReference type="Pharos" id="Q86YS3">
    <property type="development level" value="Tbio"/>
</dbReference>
<dbReference type="PRO" id="PR:Q86YS3"/>
<dbReference type="Proteomes" id="UP000005640">
    <property type="component" value="Chromosome 17"/>
</dbReference>
<dbReference type="RNAct" id="Q86YS3">
    <property type="molecule type" value="protein"/>
</dbReference>
<dbReference type="Bgee" id="ENSG00000131242">
    <property type="expression patterns" value="Expressed in prefrontal cortex and 142 other cell types or tissues"/>
</dbReference>
<dbReference type="ExpressionAtlas" id="Q86YS3">
    <property type="expression patterns" value="baseline and differential"/>
</dbReference>
<dbReference type="GO" id="GO:0005813">
    <property type="term" value="C:centrosome"/>
    <property type="evidence" value="ECO:0007669"/>
    <property type="project" value="UniProtKB-SubCell"/>
</dbReference>
<dbReference type="GO" id="GO:0032154">
    <property type="term" value="C:cleavage furrow"/>
    <property type="evidence" value="ECO:0000314"/>
    <property type="project" value="UniProtKB"/>
</dbReference>
<dbReference type="GO" id="GO:0030139">
    <property type="term" value="C:endocytic vesicle"/>
    <property type="evidence" value="ECO:0000314"/>
    <property type="project" value="UniProtKB"/>
</dbReference>
<dbReference type="GO" id="GO:0005768">
    <property type="term" value="C:endosome"/>
    <property type="evidence" value="ECO:0000314"/>
    <property type="project" value="UniProtKB"/>
</dbReference>
<dbReference type="GO" id="GO:0005615">
    <property type="term" value="C:extracellular space"/>
    <property type="evidence" value="ECO:0007005"/>
    <property type="project" value="UniProtKB"/>
</dbReference>
<dbReference type="GO" id="GO:0005794">
    <property type="term" value="C:Golgi apparatus"/>
    <property type="evidence" value="ECO:0000314"/>
    <property type="project" value="HPA"/>
</dbReference>
<dbReference type="GO" id="GO:0043231">
    <property type="term" value="C:intracellular membrane-bounded organelle"/>
    <property type="evidence" value="ECO:0000314"/>
    <property type="project" value="HPA"/>
</dbReference>
<dbReference type="GO" id="GO:0030496">
    <property type="term" value="C:midbody"/>
    <property type="evidence" value="ECO:0000314"/>
    <property type="project" value="UniProtKB"/>
</dbReference>
<dbReference type="GO" id="GO:0048471">
    <property type="term" value="C:perinuclear region of cytoplasm"/>
    <property type="evidence" value="ECO:0007669"/>
    <property type="project" value="Ensembl"/>
</dbReference>
<dbReference type="GO" id="GO:0055038">
    <property type="term" value="C:recycling endosome membrane"/>
    <property type="evidence" value="ECO:0000314"/>
    <property type="project" value="UniProtKB"/>
</dbReference>
<dbReference type="GO" id="GO:0005819">
    <property type="term" value="C:spindle"/>
    <property type="evidence" value="ECO:0007669"/>
    <property type="project" value="UniProtKB-SubCell"/>
</dbReference>
<dbReference type="GO" id="GO:0005509">
    <property type="term" value="F:calcium ion binding"/>
    <property type="evidence" value="ECO:0007669"/>
    <property type="project" value="InterPro"/>
</dbReference>
<dbReference type="GO" id="GO:0042803">
    <property type="term" value="F:protein homodimerization activity"/>
    <property type="evidence" value="ECO:0000314"/>
    <property type="project" value="UniProtKB"/>
</dbReference>
<dbReference type="GO" id="GO:0031267">
    <property type="term" value="F:small GTPase binding"/>
    <property type="evidence" value="ECO:0000353"/>
    <property type="project" value="UniProtKB"/>
</dbReference>
<dbReference type="GO" id="GO:0032456">
    <property type="term" value="P:endocytic recycling"/>
    <property type="evidence" value="ECO:0000318"/>
    <property type="project" value="GO_Central"/>
</dbReference>
<dbReference type="GO" id="GO:0003407">
    <property type="term" value="P:neural retina development"/>
    <property type="evidence" value="ECO:0007669"/>
    <property type="project" value="Ensembl"/>
</dbReference>
<dbReference type="GO" id="GO:1903452">
    <property type="term" value="P:positive regulation of G1 to G0 transition"/>
    <property type="evidence" value="ECO:0007669"/>
    <property type="project" value="Ensembl"/>
</dbReference>
<dbReference type="GO" id="GO:0032465">
    <property type="term" value="P:regulation of cytokinesis"/>
    <property type="evidence" value="ECO:0000315"/>
    <property type="project" value="UniProtKB"/>
</dbReference>
<dbReference type="FunFam" id="1.10.238.10:FF:000284">
    <property type="entry name" value="RAB11 family interacting protein 4"/>
    <property type="match status" value="1"/>
</dbReference>
<dbReference type="FunFam" id="1.20.5.2440:FF:000001">
    <property type="entry name" value="RAB11 family interacting protein 4"/>
    <property type="match status" value="1"/>
</dbReference>
<dbReference type="Gene3D" id="1.20.5.2440">
    <property type="match status" value="1"/>
</dbReference>
<dbReference type="Gene3D" id="1.10.238.10">
    <property type="entry name" value="EF-hand"/>
    <property type="match status" value="1"/>
</dbReference>
<dbReference type="InterPro" id="IPR011992">
    <property type="entry name" value="EF-hand-dom_pair"/>
</dbReference>
<dbReference type="InterPro" id="IPR002048">
    <property type="entry name" value="EF_hand_dom"/>
</dbReference>
<dbReference type="InterPro" id="IPR037245">
    <property type="entry name" value="FIP-RBD_C_sf"/>
</dbReference>
<dbReference type="InterPro" id="IPR019018">
    <property type="entry name" value="Rab-bd_FIP-RBD"/>
</dbReference>
<dbReference type="InterPro" id="IPR051977">
    <property type="entry name" value="Rab11-interacting_regulator"/>
</dbReference>
<dbReference type="PANTHER" id="PTHR15726:SF5">
    <property type="entry name" value="RAB11 FAMILY-INTERACTING PROTEIN 4"/>
    <property type="match status" value="1"/>
</dbReference>
<dbReference type="PANTHER" id="PTHR15726">
    <property type="entry name" value="RAB11-FAMILY INTERACTING PROTEIN"/>
    <property type="match status" value="1"/>
</dbReference>
<dbReference type="Pfam" id="PF25450">
    <property type="entry name" value="Rab11-FIP3"/>
    <property type="match status" value="1"/>
</dbReference>
<dbReference type="Pfam" id="PF09457">
    <property type="entry name" value="RBD-FIP"/>
    <property type="match status" value="1"/>
</dbReference>
<dbReference type="SUPFAM" id="SSF47473">
    <property type="entry name" value="EF-hand"/>
    <property type="match status" value="1"/>
</dbReference>
<dbReference type="SUPFAM" id="SSF144270">
    <property type="entry name" value="Eferin C-derminal domain-like"/>
    <property type="match status" value="1"/>
</dbReference>
<dbReference type="PROSITE" id="PS50222">
    <property type="entry name" value="EF_HAND_2"/>
    <property type="match status" value="1"/>
</dbReference>
<dbReference type="PROSITE" id="PS51511">
    <property type="entry name" value="FIP_RBD"/>
    <property type="match status" value="1"/>
</dbReference>
<protein>
    <recommendedName>
        <fullName>Rab11 family-interacting protein 4</fullName>
        <shortName>FIP4-Rab11</shortName>
        <shortName>Rab11-FIP4</shortName>
    </recommendedName>
    <alternativeName>
        <fullName>Arfophilin-2</fullName>
    </alternativeName>
</protein>
<proteinExistence type="evidence at protein level"/>
<comment type="function">
    <text evidence="7">Acts as a regulator of endocytic traffic by participating in membrane delivery. Required for the abscission step in cytokinesis, possibly by acting as an 'address tag' delivering recycling endosome membranes to the cleavage furrow during late cytokinesis. In case of infection by HCMV (human cytomegalovirus), may participate in egress of the virus out of nucleus; this function is independent of ARF6.</text>
</comment>
<comment type="subunit">
    <text evidence="6 7 9 10 11 12">Homodimer. Forms a complex with Rab11 (RAB11A or RAB11B) and ARF6. Interacts with RAB11A; the interaction is direct. Forms a heterooligomeric complex with RAB11FIP2, RAB11FIP3 and RAB11FIP5. Interacts with ECPAS.</text>
</comment>
<comment type="subunit">
    <text evidence="11">(Microbial infection) Interacts with human cytomegalovirus/HHV-5 protein gM/UL100.</text>
</comment>
<comment type="interaction">
    <interactant intactId="EBI-949727">
        <id>Q86YS3</id>
    </interactant>
    <interactant intactId="EBI-77889">
        <id>Q9UI95</id>
        <label>MAD2L2</label>
    </interactant>
    <organismsDiffer>false</organismsDiffer>
    <experiments>3</experiments>
</comment>
<comment type="interaction">
    <interactant intactId="EBI-949727">
        <id>Q86YS3</id>
    </interactant>
    <interactant intactId="EBI-988682">
        <id>P62331</id>
        <label>Arf6</label>
    </interactant>
    <organismsDiffer>true</organismsDiffer>
    <experiments>2</experiments>
</comment>
<comment type="interaction">
    <interactant intactId="EBI-15605259">
        <id>Q86YS3-1</id>
    </interactant>
    <interactant intactId="EBI-745098">
        <id>P62491</id>
        <label>RAB11A</label>
    </interactant>
    <organismsDiffer>false</organismsDiffer>
    <experiments>2</experiments>
</comment>
<comment type="subcellular location">
    <subcellularLocation>
        <location evidence="12">Endosome</location>
    </subcellularLocation>
    <subcellularLocation>
        <location evidence="8">Cytoplasm</location>
        <location evidence="8">Cytoskeleton</location>
        <location evidence="8">Spindle</location>
    </subcellularLocation>
    <subcellularLocation>
        <location evidence="8">Cytoplasm</location>
        <location evidence="8">Cytoskeleton</location>
        <location evidence="8">Microtubule organizing center</location>
        <location evidence="8">Centrosome</location>
    </subcellularLocation>
    <subcellularLocation>
        <location evidence="9">Recycling endosome membrane</location>
        <topology>Peripheral membrane protein</topology>
    </subcellularLocation>
    <subcellularLocation>
        <location evidence="9">Cleavage furrow</location>
    </subcellularLocation>
    <subcellularLocation>
        <location evidence="8 9">Midbody</location>
    </subcellularLocation>
    <subcellularLocation>
        <location evidence="9">Cytoplasmic vesicle</location>
    </subcellularLocation>
    <text evidence="9">Recruited to the cleavage furrow and the midbody during cytokinesis.</text>
</comment>
<comment type="alternative products">
    <event type="alternative splicing"/>
    <isoform>
        <id>Q86YS3-1</id>
        <name>1</name>
        <sequence type="displayed"/>
    </isoform>
    <isoform>
        <id>Q86YS3-2</id>
        <name>2</name>
        <sequence type="described" ref="VSP_013724 VSP_013725"/>
    </isoform>
</comment>
<comment type="tissue specificity">
    <text evidence="8">Present at high level in testis (at protein level). Weakly expressed in other tissues.</text>
</comment>
<comment type="domain">
    <text evidence="1">The RBD-FIP domain mediates the interaction with Rab11 (RAB11A or RAB11B).</text>
</comment>
<gene>
    <name type="primary">RAB11FIP4</name>
    <name type="synonym">ARFO2</name>
    <name type="synonym">KIAA1821</name>
</gene>
<sequence length="637" mass="71928">MAGGAGWSGAPAALLRSVRRLREVFEVCGRDPDGFLRVERVAALGLRFGQGEEVEKLVKYLDPNDLGRINFKDFCRGVFAMKGCEELLKDVLSVESAGTLPCAPEIPDCVEQGSEVTGPTFADGELIPREPGFFPEDEEEAMTLAPPEGPQELYTDSPMESTQSLEGSVGSPAEKDGGLGGLFLPEDKSLVHTPSMTTSDLSTHSTTSLISNEEQFEDYGEGDDVDCAPSSPCPDDETRTNVYSDLGSSVSSSAGQTPRKMRHVYNSELLDVYCSQCCKKINLLNDLEARLKNLKANSPNRKISSTAFGRQLMHSSNFSSSNGSTEDLFRDSIDSCDNDITEKVSFLEKKVTELENDSLTNGDLKSKLKQENTQLVHRVHELEEMVKDQETTAEQALEEEARRHREAYGKLEREKATEVELLNARVQQLEEENTELRTTVTRLKSQTEKLDEERQRMSDRLEDTSLRLKDEMDLYKRMMDKLRQNRLEFQKEREATQELIEDLRKELEHLQMYKLDCERPGRGRSASSGLGEFNARAREVELEHEVKRLKQENYKLRDQNDDLNGQILSLSLYEAKNLFAAQTKAQSLAAEIDTASRDELMEALKEQEEINFRLRQYMDKIILAILDHNPSILEIKH</sequence>
<feature type="chain" id="PRO_0000073880" description="Rab11 family-interacting protein 4">
    <location>
        <begin position="1"/>
        <end position="637"/>
    </location>
</feature>
<feature type="domain" description="EF-hand" evidence="3">
    <location>
        <begin position="49"/>
        <end position="84"/>
    </location>
</feature>
<feature type="domain" description="FIP-RBD" evidence="4">
    <location>
        <begin position="574"/>
        <end position="636"/>
    </location>
</feature>
<feature type="region of interest" description="Necessary for interaction with RAB11A, subcellular location, homo- or heterooligomerization">
    <location>
        <begin position="82"/>
        <end position="637"/>
    </location>
</feature>
<feature type="region of interest" description="Disordered" evidence="5">
    <location>
        <begin position="138"/>
        <end position="175"/>
    </location>
</feature>
<feature type="region of interest" description="Disordered" evidence="5">
    <location>
        <begin position="219"/>
        <end position="256"/>
    </location>
</feature>
<feature type="coiled-coil region" evidence="2">
    <location>
        <begin position="280"/>
        <end position="617"/>
    </location>
</feature>
<feature type="binding site" evidence="14">
    <location>
        <position position="62"/>
    </location>
    <ligand>
        <name>Ca(2+)</name>
        <dbReference type="ChEBI" id="CHEBI:29108"/>
    </ligand>
</feature>
<feature type="binding site" evidence="14">
    <location>
        <position position="64"/>
    </location>
    <ligand>
        <name>Ca(2+)</name>
        <dbReference type="ChEBI" id="CHEBI:29108"/>
    </ligand>
</feature>
<feature type="binding site" evidence="14">
    <location>
        <position position="68"/>
    </location>
    <ligand>
        <name>Ca(2+)</name>
        <dbReference type="ChEBI" id="CHEBI:29108"/>
    </ligand>
</feature>
<feature type="binding site" evidence="14">
    <location>
        <position position="73"/>
    </location>
    <ligand>
        <name>Ca(2+)</name>
        <dbReference type="ChEBI" id="CHEBI:29108"/>
    </ligand>
</feature>
<feature type="splice variant" id="VSP_013724" description="In isoform 2." evidence="13">
    <location>
        <begin position="1"/>
        <end position="102"/>
    </location>
</feature>
<feature type="splice variant" id="VSP_013725" description="In isoform 2." evidence="13">
    <original>APEIPDCVE</original>
    <variation>MRTPPALGS</variation>
    <location>
        <begin position="103"/>
        <end position="111"/>
    </location>
</feature>
<feature type="mutagenesis site" description="Abolishes Rab11-binding." evidence="10">
    <original>D</original>
    <variation>A</variation>
    <location>
        <position position="627"/>
    </location>
</feature>
<feature type="sequence conflict" description="In Ref. 2; BAC05045." evidence="14" ref="2">
    <original>T</original>
    <variation>I</variation>
    <location>
        <position position="417"/>
    </location>
</feature>
<feature type="sequence conflict" description="In Ref. 2; BAC05045." evidence="14" ref="2">
    <original>E</original>
    <variation>G</variation>
    <location>
        <position position="518"/>
    </location>
</feature>